<gene>
    <name evidence="1" type="primary">serS1</name>
    <name type="synonym">serS</name>
    <name type="ordered locus">CA_C0021</name>
</gene>
<evidence type="ECO:0000255" key="1">
    <source>
        <dbReference type="HAMAP-Rule" id="MF_00176"/>
    </source>
</evidence>
<organism>
    <name type="scientific">Clostridium acetobutylicum (strain ATCC 824 / DSM 792 / JCM 1419 / IAM 19013 / LMG 5710 / NBRC 13948 / NRRL B-527 / VKM B-1787 / 2291 / W)</name>
    <dbReference type="NCBI Taxonomy" id="272562"/>
    <lineage>
        <taxon>Bacteria</taxon>
        <taxon>Bacillati</taxon>
        <taxon>Bacillota</taxon>
        <taxon>Clostridia</taxon>
        <taxon>Eubacteriales</taxon>
        <taxon>Clostridiaceae</taxon>
        <taxon>Clostridium</taxon>
    </lineage>
</organism>
<name>SYS1_CLOAB</name>
<feature type="chain" id="PRO_0000122034" description="Serine--tRNA ligase 1">
    <location>
        <begin position="1"/>
        <end position="424"/>
    </location>
</feature>
<feature type="binding site" evidence="1">
    <location>
        <begin position="232"/>
        <end position="234"/>
    </location>
    <ligand>
        <name>L-serine</name>
        <dbReference type="ChEBI" id="CHEBI:33384"/>
    </ligand>
</feature>
<feature type="binding site" evidence="1">
    <location>
        <begin position="263"/>
        <end position="265"/>
    </location>
    <ligand>
        <name>ATP</name>
        <dbReference type="ChEBI" id="CHEBI:30616"/>
    </ligand>
</feature>
<feature type="binding site" evidence="1">
    <location>
        <position position="286"/>
    </location>
    <ligand>
        <name>L-serine</name>
        <dbReference type="ChEBI" id="CHEBI:33384"/>
    </ligand>
</feature>
<feature type="binding site" evidence="1">
    <location>
        <begin position="350"/>
        <end position="353"/>
    </location>
    <ligand>
        <name>ATP</name>
        <dbReference type="ChEBI" id="CHEBI:30616"/>
    </ligand>
</feature>
<feature type="binding site" evidence="1">
    <location>
        <position position="386"/>
    </location>
    <ligand>
        <name>L-serine</name>
        <dbReference type="ChEBI" id="CHEBI:33384"/>
    </ligand>
</feature>
<accession>Q97N17</accession>
<protein>
    <recommendedName>
        <fullName evidence="1">Serine--tRNA ligase 1</fullName>
        <ecNumber evidence="1">6.1.1.11</ecNumber>
    </recommendedName>
    <alternativeName>
        <fullName evidence="1">Seryl-tRNA synthetase 1</fullName>
        <shortName evidence="1">SerRS 1</shortName>
    </alternativeName>
    <alternativeName>
        <fullName evidence="1">Seryl-tRNA(Ser/Sec) synthetase 1</fullName>
    </alternativeName>
</protein>
<comment type="function">
    <text evidence="1">Catalyzes the attachment of serine to tRNA(Ser). Is also able to aminoacylate tRNA(Sec) with serine, to form the misacylated tRNA L-seryl-tRNA(Sec), which will be further converted into selenocysteinyl-tRNA(Sec).</text>
</comment>
<comment type="catalytic activity">
    <reaction evidence="1">
        <text>tRNA(Ser) + L-serine + ATP = L-seryl-tRNA(Ser) + AMP + diphosphate + H(+)</text>
        <dbReference type="Rhea" id="RHEA:12292"/>
        <dbReference type="Rhea" id="RHEA-COMP:9669"/>
        <dbReference type="Rhea" id="RHEA-COMP:9703"/>
        <dbReference type="ChEBI" id="CHEBI:15378"/>
        <dbReference type="ChEBI" id="CHEBI:30616"/>
        <dbReference type="ChEBI" id="CHEBI:33019"/>
        <dbReference type="ChEBI" id="CHEBI:33384"/>
        <dbReference type="ChEBI" id="CHEBI:78442"/>
        <dbReference type="ChEBI" id="CHEBI:78533"/>
        <dbReference type="ChEBI" id="CHEBI:456215"/>
        <dbReference type="EC" id="6.1.1.11"/>
    </reaction>
</comment>
<comment type="catalytic activity">
    <reaction evidence="1">
        <text>tRNA(Sec) + L-serine + ATP = L-seryl-tRNA(Sec) + AMP + diphosphate + H(+)</text>
        <dbReference type="Rhea" id="RHEA:42580"/>
        <dbReference type="Rhea" id="RHEA-COMP:9742"/>
        <dbReference type="Rhea" id="RHEA-COMP:10128"/>
        <dbReference type="ChEBI" id="CHEBI:15378"/>
        <dbReference type="ChEBI" id="CHEBI:30616"/>
        <dbReference type="ChEBI" id="CHEBI:33019"/>
        <dbReference type="ChEBI" id="CHEBI:33384"/>
        <dbReference type="ChEBI" id="CHEBI:78442"/>
        <dbReference type="ChEBI" id="CHEBI:78533"/>
        <dbReference type="ChEBI" id="CHEBI:456215"/>
        <dbReference type="EC" id="6.1.1.11"/>
    </reaction>
</comment>
<comment type="pathway">
    <text evidence="1">Aminoacyl-tRNA biosynthesis; selenocysteinyl-tRNA(Sec) biosynthesis; L-seryl-tRNA(Sec) from L-serine and tRNA(Sec): step 1/1.</text>
</comment>
<comment type="subunit">
    <text evidence="1">Homodimer. The tRNA molecule binds across the dimer.</text>
</comment>
<comment type="subcellular location">
    <subcellularLocation>
        <location evidence="1">Cytoplasm</location>
    </subcellularLocation>
</comment>
<comment type="domain">
    <text evidence="1">Consists of two distinct domains, a catalytic core and a N-terminal extension that is involved in tRNA binding.</text>
</comment>
<comment type="similarity">
    <text evidence="1">Belongs to the class-II aminoacyl-tRNA synthetase family. Type-1 seryl-tRNA synthetase subfamily.</text>
</comment>
<reference key="1">
    <citation type="journal article" date="2001" name="J. Bacteriol.">
        <title>Genome sequence and comparative analysis of the solvent-producing bacterium Clostridium acetobutylicum.</title>
        <authorList>
            <person name="Noelling J."/>
            <person name="Breton G."/>
            <person name="Omelchenko M.V."/>
            <person name="Makarova K.S."/>
            <person name="Zeng Q."/>
            <person name="Gibson R."/>
            <person name="Lee H.M."/>
            <person name="Dubois J."/>
            <person name="Qiu D."/>
            <person name="Hitti J."/>
            <person name="Wolf Y.I."/>
            <person name="Tatusov R.L."/>
            <person name="Sabathe F."/>
            <person name="Doucette-Stamm L.A."/>
            <person name="Soucaille P."/>
            <person name="Daly M.J."/>
            <person name="Bennett G.N."/>
            <person name="Koonin E.V."/>
            <person name="Smith D.R."/>
        </authorList>
    </citation>
    <scope>NUCLEOTIDE SEQUENCE [LARGE SCALE GENOMIC DNA]</scope>
    <source>
        <strain>ATCC 824 / DSM 792 / JCM 1419 / IAM 19013 / LMG 5710 / NBRC 13948 / NRRL B-527 / VKM B-1787 / 2291 / W</strain>
    </source>
</reference>
<proteinExistence type="inferred from homology"/>
<dbReference type="EC" id="6.1.1.11" evidence="1"/>
<dbReference type="EMBL" id="AE001437">
    <property type="protein sequence ID" value="AAK78008.1"/>
    <property type="molecule type" value="Genomic_DNA"/>
</dbReference>
<dbReference type="PIR" id="E96902">
    <property type="entry name" value="E96902"/>
</dbReference>
<dbReference type="RefSeq" id="NP_346668.1">
    <property type="nucleotide sequence ID" value="NC_003030.1"/>
</dbReference>
<dbReference type="RefSeq" id="WP_010963350.1">
    <property type="nucleotide sequence ID" value="NC_003030.1"/>
</dbReference>
<dbReference type="SMR" id="Q97N17"/>
<dbReference type="STRING" id="272562.CA_C0021"/>
<dbReference type="GeneID" id="44996499"/>
<dbReference type="KEGG" id="cac:CA_C0021"/>
<dbReference type="PATRIC" id="fig|272562.8.peg.200"/>
<dbReference type="eggNOG" id="COG0172">
    <property type="taxonomic scope" value="Bacteria"/>
</dbReference>
<dbReference type="HOGENOM" id="CLU_023797_1_1_9"/>
<dbReference type="OrthoDB" id="9804647at2"/>
<dbReference type="UniPathway" id="UPA00906">
    <property type="reaction ID" value="UER00895"/>
</dbReference>
<dbReference type="Proteomes" id="UP000000814">
    <property type="component" value="Chromosome"/>
</dbReference>
<dbReference type="GO" id="GO:0005737">
    <property type="term" value="C:cytoplasm"/>
    <property type="evidence" value="ECO:0007669"/>
    <property type="project" value="UniProtKB-SubCell"/>
</dbReference>
<dbReference type="GO" id="GO:0005524">
    <property type="term" value="F:ATP binding"/>
    <property type="evidence" value="ECO:0007669"/>
    <property type="project" value="UniProtKB-UniRule"/>
</dbReference>
<dbReference type="GO" id="GO:0140096">
    <property type="term" value="F:catalytic activity, acting on a protein"/>
    <property type="evidence" value="ECO:0007669"/>
    <property type="project" value="UniProtKB-ARBA"/>
</dbReference>
<dbReference type="GO" id="GO:0004828">
    <property type="term" value="F:serine-tRNA ligase activity"/>
    <property type="evidence" value="ECO:0007669"/>
    <property type="project" value="UniProtKB-UniRule"/>
</dbReference>
<dbReference type="GO" id="GO:0016740">
    <property type="term" value="F:transferase activity"/>
    <property type="evidence" value="ECO:0007669"/>
    <property type="project" value="UniProtKB-ARBA"/>
</dbReference>
<dbReference type="GO" id="GO:0016260">
    <property type="term" value="P:selenocysteine biosynthetic process"/>
    <property type="evidence" value="ECO:0007669"/>
    <property type="project" value="UniProtKB-UniRule"/>
</dbReference>
<dbReference type="GO" id="GO:0006434">
    <property type="term" value="P:seryl-tRNA aminoacylation"/>
    <property type="evidence" value="ECO:0007669"/>
    <property type="project" value="UniProtKB-UniRule"/>
</dbReference>
<dbReference type="CDD" id="cd00770">
    <property type="entry name" value="SerRS_core"/>
    <property type="match status" value="1"/>
</dbReference>
<dbReference type="Gene3D" id="3.30.930.10">
    <property type="entry name" value="Bira Bifunctional Protein, Domain 2"/>
    <property type="match status" value="1"/>
</dbReference>
<dbReference type="Gene3D" id="1.10.287.40">
    <property type="entry name" value="Serine-tRNA synthetase, tRNA binding domain"/>
    <property type="match status" value="1"/>
</dbReference>
<dbReference type="HAMAP" id="MF_00176">
    <property type="entry name" value="Ser_tRNA_synth_type1"/>
    <property type="match status" value="1"/>
</dbReference>
<dbReference type="InterPro" id="IPR002314">
    <property type="entry name" value="aa-tRNA-synt_IIb"/>
</dbReference>
<dbReference type="InterPro" id="IPR006195">
    <property type="entry name" value="aa-tRNA-synth_II"/>
</dbReference>
<dbReference type="InterPro" id="IPR045864">
    <property type="entry name" value="aa-tRNA-synth_II/BPL/LPL"/>
</dbReference>
<dbReference type="InterPro" id="IPR002317">
    <property type="entry name" value="Ser-tRNA-ligase_type_1"/>
</dbReference>
<dbReference type="InterPro" id="IPR015866">
    <property type="entry name" value="Ser-tRNA-synth_1_N"/>
</dbReference>
<dbReference type="InterPro" id="IPR042103">
    <property type="entry name" value="SerRS_1_N_sf"/>
</dbReference>
<dbReference type="InterPro" id="IPR033729">
    <property type="entry name" value="SerRS_core"/>
</dbReference>
<dbReference type="InterPro" id="IPR010978">
    <property type="entry name" value="tRNA-bd_arm"/>
</dbReference>
<dbReference type="NCBIfam" id="TIGR00414">
    <property type="entry name" value="serS"/>
    <property type="match status" value="1"/>
</dbReference>
<dbReference type="PANTHER" id="PTHR43697:SF1">
    <property type="entry name" value="SERINE--TRNA LIGASE"/>
    <property type="match status" value="1"/>
</dbReference>
<dbReference type="PANTHER" id="PTHR43697">
    <property type="entry name" value="SERYL-TRNA SYNTHETASE"/>
    <property type="match status" value="1"/>
</dbReference>
<dbReference type="Pfam" id="PF02403">
    <property type="entry name" value="Seryl_tRNA_N"/>
    <property type="match status" value="1"/>
</dbReference>
<dbReference type="Pfam" id="PF00587">
    <property type="entry name" value="tRNA-synt_2b"/>
    <property type="match status" value="1"/>
</dbReference>
<dbReference type="PIRSF" id="PIRSF001529">
    <property type="entry name" value="Ser-tRNA-synth_IIa"/>
    <property type="match status" value="1"/>
</dbReference>
<dbReference type="PRINTS" id="PR00981">
    <property type="entry name" value="TRNASYNTHSER"/>
</dbReference>
<dbReference type="SUPFAM" id="SSF55681">
    <property type="entry name" value="Class II aaRS and biotin synthetases"/>
    <property type="match status" value="1"/>
</dbReference>
<dbReference type="SUPFAM" id="SSF46589">
    <property type="entry name" value="tRNA-binding arm"/>
    <property type="match status" value="1"/>
</dbReference>
<dbReference type="PROSITE" id="PS50862">
    <property type="entry name" value="AA_TRNA_LIGASE_II"/>
    <property type="match status" value="1"/>
</dbReference>
<keyword id="KW-0030">Aminoacyl-tRNA synthetase</keyword>
<keyword id="KW-0067">ATP-binding</keyword>
<keyword id="KW-0963">Cytoplasm</keyword>
<keyword id="KW-0436">Ligase</keyword>
<keyword id="KW-0547">Nucleotide-binding</keyword>
<keyword id="KW-0648">Protein biosynthesis</keyword>
<keyword id="KW-1185">Reference proteome</keyword>
<sequence length="424" mass="48446">MLDLKRIRTNPEEIKKALTNRGEDFDISVIDELVSLDEERRKNLVEVENLKSKRNKDSGEIAKLKKSGQNADELLAEMKKISDDIKGIDAKVSEIDEKMQYIMLRIPNIPHPSVPEGKSDEENVEIRKWGEPRKFDFEFKAHWDIGTDLGLLDFERGGKVAGSRFTFYKGLGARLERAVINYFLDTHVEKHGYTEILPPYMVNRVSMTGTGQLPKFEEDAFKVDNGFFLIPTAEVPVTNMFRDEILKAEDLPYKFAAYSACFRSEAGSAGRDTRGLVRQHQFNKVELVKFAKPEESYDELEKLTHDAEEILQILNIPYRVVRICKGDLGFTAALKYDIEVWMPSYGRYVEISSCSNFEDFQARRANIKFRRDPKAKPEFVHTLNGSGLAVGRTVAAILENYQNEDGSVNVPEALKKYIGKDVIR</sequence>